<sequence length="203" mass="21904">MSAIAPGMILFAYLCGSISSAILVCRIAGLPDPRESGSGNPGATNVLRIGGKGAAVAVLIFDILKGMLPVWGAYALGVTPFWLGLIAIAACLGHIWPVFFGFKGGKGVATAFGAIAPIGWDLTGVMAGTWLLTVLLSGYSSLGAIVSALIAPFYVWWFKPQFTFPVSMLSCLILLRHHDNIQRLWRRQETKIWTKLKKKRQKD</sequence>
<keyword id="KW-0997">Cell inner membrane</keyword>
<keyword id="KW-1003">Cell membrane</keyword>
<keyword id="KW-0444">Lipid biosynthesis</keyword>
<keyword id="KW-0443">Lipid metabolism</keyword>
<keyword id="KW-0472">Membrane</keyword>
<keyword id="KW-0594">Phospholipid biosynthesis</keyword>
<keyword id="KW-1208">Phospholipid metabolism</keyword>
<keyword id="KW-0808">Transferase</keyword>
<keyword id="KW-0812">Transmembrane</keyword>
<keyword id="KW-1133">Transmembrane helix</keyword>
<accession>B5BG18</accession>
<protein>
    <recommendedName>
        <fullName evidence="1">Glycerol-3-phosphate acyltransferase</fullName>
    </recommendedName>
    <alternativeName>
        <fullName evidence="1">G3P acyltransferase</fullName>
        <shortName evidence="1">GPAT</shortName>
        <ecNumber evidence="1">2.3.1.15</ecNumber>
        <ecNumber evidence="1">2.3.1.n5</ecNumber>
    </alternativeName>
    <alternativeName>
        <fullName evidence="1">Lysophosphatidic acid synthase</fullName>
        <shortName evidence="1">LPA synthase</shortName>
    </alternativeName>
</protein>
<organism>
    <name type="scientific">Salmonella paratyphi A (strain AKU_12601)</name>
    <dbReference type="NCBI Taxonomy" id="554290"/>
    <lineage>
        <taxon>Bacteria</taxon>
        <taxon>Pseudomonadati</taxon>
        <taxon>Pseudomonadota</taxon>
        <taxon>Gammaproteobacteria</taxon>
        <taxon>Enterobacterales</taxon>
        <taxon>Enterobacteriaceae</taxon>
        <taxon>Salmonella</taxon>
    </lineage>
</organism>
<reference key="1">
    <citation type="journal article" date="2009" name="BMC Genomics">
        <title>Pseudogene accumulation in the evolutionary histories of Salmonella enterica serovars Paratyphi A and Typhi.</title>
        <authorList>
            <person name="Holt K.E."/>
            <person name="Thomson N.R."/>
            <person name="Wain J."/>
            <person name="Langridge G.C."/>
            <person name="Hasan R."/>
            <person name="Bhutta Z.A."/>
            <person name="Quail M.A."/>
            <person name="Norbertczak H."/>
            <person name="Walker D."/>
            <person name="Simmonds M."/>
            <person name="White B."/>
            <person name="Bason N."/>
            <person name="Mungall K."/>
            <person name="Dougan G."/>
            <person name="Parkhill J."/>
        </authorList>
    </citation>
    <scope>NUCLEOTIDE SEQUENCE [LARGE SCALE GENOMIC DNA]</scope>
    <source>
        <strain>AKU_12601</strain>
    </source>
</reference>
<gene>
    <name evidence="1" type="primary">plsY</name>
    <name type="synonym">ygiH</name>
    <name type="ordered locus">SSPA2871</name>
</gene>
<dbReference type="EC" id="2.3.1.15" evidence="1"/>
<dbReference type="EC" id="2.3.1.n5" evidence="1"/>
<dbReference type="EMBL" id="FM200053">
    <property type="protein sequence ID" value="CAR61118.1"/>
    <property type="molecule type" value="Genomic_DNA"/>
</dbReference>
<dbReference type="RefSeq" id="WP_001272784.1">
    <property type="nucleotide sequence ID" value="NC_011147.1"/>
</dbReference>
<dbReference type="SMR" id="B5BG18"/>
<dbReference type="KEGG" id="sek:SSPA2871"/>
<dbReference type="HOGENOM" id="CLU_081254_0_2_6"/>
<dbReference type="UniPathway" id="UPA00085"/>
<dbReference type="Proteomes" id="UP000001869">
    <property type="component" value="Chromosome"/>
</dbReference>
<dbReference type="GO" id="GO:0005886">
    <property type="term" value="C:plasma membrane"/>
    <property type="evidence" value="ECO:0007669"/>
    <property type="project" value="UniProtKB-SubCell"/>
</dbReference>
<dbReference type="GO" id="GO:0043772">
    <property type="term" value="F:acyl-phosphate glycerol-3-phosphate acyltransferase activity"/>
    <property type="evidence" value="ECO:0007669"/>
    <property type="project" value="InterPro"/>
</dbReference>
<dbReference type="GO" id="GO:0004366">
    <property type="term" value="F:glycerol-3-phosphate O-acyltransferase activity"/>
    <property type="evidence" value="ECO:0007669"/>
    <property type="project" value="UniProtKB-UniRule"/>
</dbReference>
<dbReference type="GO" id="GO:0008654">
    <property type="term" value="P:phospholipid biosynthetic process"/>
    <property type="evidence" value="ECO:0007669"/>
    <property type="project" value="UniProtKB-UniRule"/>
</dbReference>
<dbReference type="HAMAP" id="MF_01043">
    <property type="entry name" value="PlsY"/>
    <property type="match status" value="1"/>
</dbReference>
<dbReference type="InterPro" id="IPR003811">
    <property type="entry name" value="G3P_acylTferase_PlsY"/>
</dbReference>
<dbReference type="NCBIfam" id="TIGR00023">
    <property type="entry name" value="glycerol-3-phosphate 1-O-acyltransferase PlsY"/>
    <property type="match status" value="1"/>
</dbReference>
<dbReference type="PANTHER" id="PTHR30309:SF0">
    <property type="entry name" value="GLYCEROL-3-PHOSPHATE ACYLTRANSFERASE-RELATED"/>
    <property type="match status" value="1"/>
</dbReference>
<dbReference type="PANTHER" id="PTHR30309">
    <property type="entry name" value="INNER MEMBRANE PROTEIN YGIH"/>
    <property type="match status" value="1"/>
</dbReference>
<dbReference type="Pfam" id="PF02660">
    <property type="entry name" value="G3P_acyltransf"/>
    <property type="match status" value="1"/>
</dbReference>
<dbReference type="SMART" id="SM01207">
    <property type="entry name" value="G3P_acyltransf"/>
    <property type="match status" value="1"/>
</dbReference>
<name>PLSY_SALPK</name>
<evidence type="ECO:0000255" key="1">
    <source>
        <dbReference type="HAMAP-Rule" id="MF_01043"/>
    </source>
</evidence>
<feature type="chain" id="PRO_1000136120" description="Glycerol-3-phosphate acyltransferase">
    <location>
        <begin position="1"/>
        <end position="203"/>
    </location>
</feature>
<feature type="topological domain" description="Periplasmic" evidence="1">
    <location>
        <begin position="1"/>
        <end position="3"/>
    </location>
</feature>
<feature type="transmembrane region" description="Helical" evidence="1">
    <location>
        <begin position="4"/>
        <end position="24"/>
    </location>
</feature>
<feature type="topological domain" description="Cytoplasmic" evidence="1">
    <location>
        <begin position="25"/>
        <end position="52"/>
    </location>
</feature>
<feature type="transmembrane region" description="Helical" evidence="1">
    <location>
        <begin position="53"/>
        <end position="73"/>
    </location>
</feature>
<feature type="topological domain" description="Periplasmic" evidence="1">
    <location>
        <begin position="74"/>
        <end position="80"/>
    </location>
</feature>
<feature type="transmembrane region" description="Helical" evidence="1">
    <location>
        <begin position="81"/>
        <end position="101"/>
    </location>
</feature>
<feature type="topological domain" description="Cytoplasmic" evidence="1">
    <location>
        <begin position="102"/>
        <end position="111"/>
    </location>
</feature>
<feature type="transmembrane region" description="Helical" evidence="1">
    <location>
        <begin position="112"/>
        <end position="132"/>
    </location>
</feature>
<feature type="topological domain" description="Periplasmic" evidence="1">
    <location>
        <begin position="133"/>
        <end position="137"/>
    </location>
</feature>
<feature type="transmembrane region" description="Helical" evidence="1">
    <location>
        <begin position="138"/>
        <end position="158"/>
    </location>
</feature>
<feature type="topological domain" description="Cytoplasmic" evidence="1">
    <location>
        <begin position="159"/>
        <end position="203"/>
    </location>
</feature>
<comment type="function">
    <text evidence="1">Catalyzes the transfer of an acyl group from acyl-ACP to glycerol-3-phosphate (G3P) to form lysophosphatidic acid (LPA). This enzyme can also utilize acyl-CoA as fatty acyl donor, but not acyl-PO(4).</text>
</comment>
<comment type="catalytic activity">
    <reaction evidence="1">
        <text>sn-glycerol 3-phosphate + an acyl-CoA = a 1-acyl-sn-glycero-3-phosphate + CoA</text>
        <dbReference type="Rhea" id="RHEA:15325"/>
        <dbReference type="ChEBI" id="CHEBI:57287"/>
        <dbReference type="ChEBI" id="CHEBI:57597"/>
        <dbReference type="ChEBI" id="CHEBI:57970"/>
        <dbReference type="ChEBI" id="CHEBI:58342"/>
        <dbReference type="EC" id="2.3.1.15"/>
    </reaction>
</comment>
<comment type="catalytic activity">
    <reaction evidence="1">
        <text>a fatty acyl-[ACP] + sn-glycerol 3-phosphate = a 1-acyl-sn-glycero-3-phosphate + holo-[ACP]</text>
        <dbReference type="Rhea" id="RHEA:42300"/>
        <dbReference type="Rhea" id="RHEA-COMP:9685"/>
        <dbReference type="Rhea" id="RHEA-COMP:14125"/>
        <dbReference type="ChEBI" id="CHEBI:57597"/>
        <dbReference type="ChEBI" id="CHEBI:57970"/>
        <dbReference type="ChEBI" id="CHEBI:64479"/>
        <dbReference type="ChEBI" id="CHEBI:138651"/>
        <dbReference type="EC" id="2.3.1.n5"/>
    </reaction>
</comment>
<comment type="pathway">
    <text evidence="1">Lipid metabolism; phospholipid metabolism.</text>
</comment>
<comment type="subunit">
    <text evidence="1">Probably interacts with PlsX.</text>
</comment>
<comment type="subcellular location">
    <subcellularLocation>
        <location evidence="1">Cell inner membrane</location>
        <topology evidence="1">Multi-pass membrane protein</topology>
    </subcellularLocation>
</comment>
<comment type="similarity">
    <text evidence="1">Belongs to the PlsY family.</text>
</comment>
<proteinExistence type="inferred from homology"/>